<proteinExistence type="inferred from homology"/>
<feature type="chain" id="PRO_0000197475" description="Glutathione synthetase">
    <location>
        <begin position="1"/>
        <end position="307"/>
    </location>
</feature>
<feature type="domain" description="ATP-grasp" evidence="2">
    <location>
        <begin position="120"/>
        <end position="304"/>
    </location>
</feature>
<feature type="binding site" evidence="2">
    <location>
        <begin position="146"/>
        <end position="202"/>
    </location>
    <ligand>
        <name>ATP</name>
        <dbReference type="ChEBI" id="CHEBI:30616"/>
    </ligand>
</feature>
<feature type="binding site" evidence="2">
    <location>
        <position position="275"/>
    </location>
    <ligand>
        <name>Mg(2+)</name>
        <dbReference type="ChEBI" id="CHEBI:18420"/>
    </ligand>
</feature>
<feature type="binding site" evidence="2">
    <location>
        <position position="277"/>
    </location>
    <ligand>
        <name>Mg(2+)</name>
        <dbReference type="ChEBI" id="CHEBI:18420"/>
    </ligand>
</feature>
<accession>Q7TUG9</accession>
<name>GSHB_PROMP</name>
<reference key="1">
    <citation type="journal article" date="2003" name="Nature">
        <title>Genome divergence in two Prochlorococcus ecotypes reflects oceanic niche differentiation.</title>
        <authorList>
            <person name="Rocap G."/>
            <person name="Larimer F.W."/>
            <person name="Lamerdin J.E."/>
            <person name="Malfatti S."/>
            <person name="Chain P."/>
            <person name="Ahlgren N.A."/>
            <person name="Arellano A."/>
            <person name="Coleman M."/>
            <person name="Hauser L."/>
            <person name="Hess W.R."/>
            <person name="Johnson Z.I."/>
            <person name="Land M.L."/>
            <person name="Lindell D."/>
            <person name="Post A.F."/>
            <person name="Regala W."/>
            <person name="Shah M."/>
            <person name="Shaw S.L."/>
            <person name="Steglich C."/>
            <person name="Sullivan M.B."/>
            <person name="Ting C.S."/>
            <person name="Tolonen A."/>
            <person name="Webb E.A."/>
            <person name="Zinser E.R."/>
            <person name="Chisholm S.W."/>
        </authorList>
    </citation>
    <scope>NUCLEOTIDE SEQUENCE [LARGE SCALE GENOMIC DNA]</scope>
    <source>
        <strain>CCMP1986 / NIES-2087 / MED4</strain>
    </source>
</reference>
<gene>
    <name evidence="2" type="primary">gshB</name>
    <name type="ordered locus">PMM0178</name>
</gene>
<dbReference type="EC" id="6.3.2.3" evidence="2"/>
<dbReference type="EMBL" id="BX548174">
    <property type="protein sequence ID" value="CAE18637.1"/>
    <property type="molecule type" value="Genomic_DNA"/>
</dbReference>
<dbReference type="RefSeq" id="WP_011131817.1">
    <property type="nucleotide sequence ID" value="NC_005072.1"/>
</dbReference>
<dbReference type="SMR" id="Q7TUG9"/>
<dbReference type="STRING" id="59919.PMM0178"/>
<dbReference type="KEGG" id="pmm:PMM0178"/>
<dbReference type="eggNOG" id="COG0189">
    <property type="taxonomic scope" value="Bacteria"/>
</dbReference>
<dbReference type="HOGENOM" id="CLU_068239_0_0_3"/>
<dbReference type="OrthoDB" id="9785415at2"/>
<dbReference type="UniPathway" id="UPA00142">
    <property type="reaction ID" value="UER00210"/>
</dbReference>
<dbReference type="Proteomes" id="UP000001026">
    <property type="component" value="Chromosome"/>
</dbReference>
<dbReference type="GO" id="GO:0005737">
    <property type="term" value="C:cytoplasm"/>
    <property type="evidence" value="ECO:0007669"/>
    <property type="project" value="TreeGrafter"/>
</dbReference>
<dbReference type="GO" id="GO:0005524">
    <property type="term" value="F:ATP binding"/>
    <property type="evidence" value="ECO:0007669"/>
    <property type="project" value="UniProtKB-UniRule"/>
</dbReference>
<dbReference type="GO" id="GO:0004363">
    <property type="term" value="F:glutathione synthase activity"/>
    <property type="evidence" value="ECO:0007669"/>
    <property type="project" value="UniProtKB-UniRule"/>
</dbReference>
<dbReference type="GO" id="GO:0046872">
    <property type="term" value="F:metal ion binding"/>
    <property type="evidence" value="ECO:0007669"/>
    <property type="project" value="UniProtKB-KW"/>
</dbReference>
<dbReference type="Gene3D" id="3.40.50.20">
    <property type="match status" value="1"/>
</dbReference>
<dbReference type="Gene3D" id="3.30.1490.20">
    <property type="entry name" value="ATP-grasp fold, A domain"/>
    <property type="match status" value="1"/>
</dbReference>
<dbReference type="Gene3D" id="3.30.470.20">
    <property type="entry name" value="ATP-grasp fold, B domain"/>
    <property type="match status" value="1"/>
</dbReference>
<dbReference type="HAMAP" id="MF_00162">
    <property type="entry name" value="GSH_S"/>
    <property type="match status" value="1"/>
</dbReference>
<dbReference type="InterPro" id="IPR011761">
    <property type="entry name" value="ATP-grasp"/>
</dbReference>
<dbReference type="InterPro" id="IPR013815">
    <property type="entry name" value="ATP_grasp_subdomain_1"/>
</dbReference>
<dbReference type="InterPro" id="IPR006284">
    <property type="entry name" value="Glut_synth_pro"/>
</dbReference>
<dbReference type="InterPro" id="IPR004218">
    <property type="entry name" value="GSHS_ATP-bd"/>
</dbReference>
<dbReference type="InterPro" id="IPR004215">
    <property type="entry name" value="GSHS_N"/>
</dbReference>
<dbReference type="InterPro" id="IPR016185">
    <property type="entry name" value="PreATP-grasp_dom_sf"/>
</dbReference>
<dbReference type="NCBIfam" id="TIGR01380">
    <property type="entry name" value="glut_syn"/>
    <property type="match status" value="1"/>
</dbReference>
<dbReference type="NCBIfam" id="NF003573">
    <property type="entry name" value="PRK05246.1"/>
    <property type="match status" value="1"/>
</dbReference>
<dbReference type="PANTHER" id="PTHR21621:SF4">
    <property type="entry name" value="GLUTATHIONE SYNTHETASE"/>
    <property type="match status" value="1"/>
</dbReference>
<dbReference type="PANTHER" id="PTHR21621">
    <property type="entry name" value="RIBOSOMAL PROTEIN S6 MODIFICATION PROTEIN"/>
    <property type="match status" value="1"/>
</dbReference>
<dbReference type="Pfam" id="PF02955">
    <property type="entry name" value="GSH-S_ATP"/>
    <property type="match status" value="1"/>
</dbReference>
<dbReference type="Pfam" id="PF02951">
    <property type="entry name" value="GSH-S_N"/>
    <property type="match status" value="1"/>
</dbReference>
<dbReference type="SUPFAM" id="SSF56059">
    <property type="entry name" value="Glutathione synthetase ATP-binding domain-like"/>
    <property type="match status" value="1"/>
</dbReference>
<dbReference type="SUPFAM" id="SSF52440">
    <property type="entry name" value="PreATP-grasp domain"/>
    <property type="match status" value="1"/>
</dbReference>
<dbReference type="PROSITE" id="PS50975">
    <property type="entry name" value="ATP_GRASP"/>
    <property type="match status" value="1"/>
</dbReference>
<sequence length="307" mass="34254">MKFLFVVDPIKNINPLKDSSAALMQASSKKKIEVWICTPQDLEARGDEVWASSWRAEVCPWVSFKENKCIPLAEFNCIWMRKDPPVNEGYLYATHLLEVAERKGVKVINKPSSLRAWNEKLGALRYSHLMAPTIVASKVKDLINFAQINHDVVVKPLGGKGGQGVIRLTKDSPGIKAMIELITSQEQLPVMMQKFIPEVKEGDKRIIIVNGEPIGSINRIPQGGDFRSNLAMGGKAEKTNLTAKEKKICTELSQHFKDEGLFFVGIDVINEMLSEINVTSPTGLREIETLSNKSVSDKVIEKLLEII</sequence>
<keyword id="KW-0067">ATP-binding</keyword>
<keyword id="KW-0317">Glutathione biosynthesis</keyword>
<keyword id="KW-0436">Ligase</keyword>
<keyword id="KW-0460">Magnesium</keyword>
<keyword id="KW-0464">Manganese</keyword>
<keyword id="KW-0479">Metal-binding</keyword>
<keyword id="KW-0547">Nucleotide-binding</keyword>
<evidence type="ECO:0000250" key="1"/>
<evidence type="ECO:0000255" key="2">
    <source>
        <dbReference type="HAMAP-Rule" id="MF_00162"/>
    </source>
</evidence>
<comment type="catalytic activity">
    <reaction evidence="2">
        <text>gamma-L-glutamyl-L-cysteine + glycine + ATP = glutathione + ADP + phosphate + H(+)</text>
        <dbReference type="Rhea" id="RHEA:13557"/>
        <dbReference type="ChEBI" id="CHEBI:15378"/>
        <dbReference type="ChEBI" id="CHEBI:30616"/>
        <dbReference type="ChEBI" id="CHEBI:43474"/>
        <dbReference type="ChEBI" id="CHEBI:57305"/>
        <dbReference type="ChEBI" id="CHEBI:57925"/>
        <dbReference type="ChEBI" id="CHEBI:58173"/>
        <dbReference type="ChEBI" id="CHEBI:456216"/>
        <dbReference type="EC" id="6.3.2.3"/>
    </reaction>
</comment>
<comment type="cofactor">
    <cofactor evidence="1">
        <name>Mg(2+)</name>
        <dbReference type="ChEBI" id="CHEBI:18420"/>
    </cofactor>
    <cofactor evidence="1">
        <name>Mn(2+)</name>
        <dbReference type="ChEBI" id="CHEBI:29035"/>
    </cofactor>
    <text evidence="1">Binds 1 Mg(2+) or Mn(2+) ion per subunit.</text>
</comment>
<comment type="pathway">
    <text evidence="2">Sulfur metabolism; glutathione biosynthesis; glutathione from L-cysteine and L-glutamate: step 2/2.</text>
</comment>
<comment type="similarity">
    <text evidence="2">Belongs to the prokaryotic GSH synthase family.</text>
</comment>
<organism>
    <name type="scientific">Prochlorococcus marinus subsp. pastoris (strain CCMP1986 / NIES-2087 / MED4)</name>
    <dbReference type="NCBI Taxonomy" id="59919"/>
    <lineage>
        <taxon>Bacteria</taxon>
        <taxon>Bacillati</taxon>
        <taxon>Cyanobacteriota</taxon>
        <taxon>Cyanophyceae</taxon>
        <taxon>Synechococcales</taxon>
        <taxon>Prochlorococcaceae</taxon>
        <taxon>Prochlorococcus</taxon>
    </lineage>
</organism>
<protein>
    <recommendedName>
        <fullName evidence="2">Glutathione synthetase</fullName>
        <ecNumber evidence="2">6.3.2.3</ecNumber>
    </recommendedName>
    <alternativeName>
        <fullName evidence="2">GSH synthetase</fullName>
        <shortName evidence="2">GSH-S</shortName>
        <shortName evidence="2">GSHase</shortName>
    </alternativeName>
    <alternativeName>
        <fullName evidence="2">Glutathione synthase</fullName>
    </alternativeName>
</protein>